<reference key="1">
    <citation type="submission" date="1998-09" db="EMBL/GenBank/DDBJ databases">
        <title>Complete genomic sequence of vaccinia virus (Tian Tan strain).</title>
        <authorList>
            <person name="Jin Q."/>
            <person name="Hou Y.D."/>
            <person name="Cheng N.H."/>
            <person name="Yao E.M."/>
            <person name="Cheng S.X."/>
            <person name="Yang X.K."/>
            <person name="Jing D.Y."/>
            <person name="Yu W.H."/>
            <person name="Yuan J.S."/>
            <person name="Ma X.J."/>
        </authorList>
    </citation>
    <scope>NUCLEOTIDE SEQUENCE [LARGE SCALE GENOMIC DNA]</scope>
</reference>
<keyword id="KW-0426">Late protein</keyword>
<keyword id="KW-0472">Membrane</keyword>
<keyword id="KW-0812">Transmembrane</keyword>
<keyword id="KW-1133">Transmembrane helix</keyword>
<proteinExistence type="evidence at transcript level"/>
<sequence>MEMDKRMKSLAMTAFFGELNTLDIMALIMSIFKRHPNNTIFSVDKDGQFIIDFEYDNYKASQYLDLTLTPISGDECKTHASSIAEQLACVDIIKEDISEYIKTTPRLKRFIKKYRNRSDTRISRDTEKLKIALAKGIDYEYIKDAC</sequence>
<protein>
    <recommendedName>
        <fullName>Late protein H7</fullName>
    </recommendedName>
</protein>
<organism>
    <name type="scientific">Vaccinia virus (strain Tian Tan)</name>
    <name type="common">VACV</name>
    <dbReference type="NCBI Taxonomy" id="10253"/>
    <lineage>
        <taxon>Viruses</taxon>
        <taxon>Varidnaviria</taxon>
        <taxon>Bamfordvirae</taxon>
        <taxon>Nucleocytoviricota</taxon>
        <taxon>Pokkesviricetes</taxon>
        <taxon>Chitovirales</taxon>
        <taxon>Poxviridae</taxon>
        <taxon>Chordopoxvirinae</taxon>
        <taxon>Orthopoxvirus</taxon>
        <taxon>Vaccinia virus</taxon>
    </lineage>
</organism>
<accession>Q9JFA9</accession>
<name>H7_VACCT</name>
<gene>
    <name type="ORF">TH8R</name>
</gene>
<comment type="function">
    <text evidence="1">Contributes to the formation of crescents and immature virions (IV).</text>
</comment>
<comment type="subcellular location">
    <subcellularLocation>
        <location evidence="3">Membrane</location>
        <topology evidence="3">Single-pass membrane protein</topology>
    </subcellularLocation>
    <text evidence="1">Probably transitorily part of the membrane of crescents during immature virions formation. Not incorporated into virions. Probably synthesized, but not retained in viral factories (By similarity).</text>
</comment>
<comment type="induction">
    <text>Expressed in the late phase of the viral replicative cycle.</text>
</comment>
<comment type="similarity">
    <text evidence="3">Belongs to the chordopoxvirinae H7 family.</text>
</comment>
<evidence type="ECO:0000250" key="1"/>
<evidence type="ECO:0000255" key="2"/>
<evidence type="ECO:0000305" key="3"/>
<organismHost>
    <name type="scientific">Homo sapiens</name>
    <name type="common">Human</name>
    <dbReference type="NCBI Taxonomy" id="9606"/>
</organismHost>
<feature type="chain" id="PRO_0000099552" description="Late protein H7">
    <location>
        <begin position="1"/>
        <end position="146"/>
    </location>
</feature>
<feature type="transmembrane region" description="Helical" evidence="2">
    <location>
        <begin position="10"/>
        <end position="32"/>
    </location>
</feature>
<dbReference type="EMBL" id="AF095689">
    <property type="protein sequence ID" value="AAF33966.1"/>
    <property type="molecule type" value="Genomic_DNA"/>
</dbReference>
<dbReference type="SMR" id="Q9JFA9"/>
<dbReference type="Proteomes" id="UP000163220">
    <property type="component" value="Genome"/>
</dbReference>
<dbReference type="GO" id="GO:0016020">
    <property type="term" value="C:membrane"/>
    <property type="evidence" value="ECO:0007669"/>
    <property type="project" value="UniProtKB-SubCell"/>
</dbReference>
<dbReference type="InterPro" id="IPR006872">
    <property type="entry name" value="Poxvirus_H7"/>
</dbReference>
<dbReference type="Pfam" id="PF04787">
    <property type="entry name" value="Pox_H7"/>
    <property type="match status" value="1"/>
</dbReference>